<dbReference type="EC" id="2.3.1.161" evidence="1 16"/>
<dbReference type="EMBL" id="AH007774">
    <property type="protein sequence ID" value="AAD34554.1"/>
    <property type="molecule type" value="Genomic_DNA"/>
</dbReference>
<dbReference type="PDB" id="3B6Z">
    <property type="method" value="X-ray"/>
    <property type="resolution" value="1.88 A"/>
    <property type="chains" value="A=1-363"/>
</dbReference>
<dbReference type="PDB" id="3B70">
    <property type="method" value="X-ray"/>
    <property type="resolution" value="1.89 A"/>
    <property type="chains" value="A=1-363"/>
</dbReference>
<dbReference type="PDB" id="3GQV">
    <property type="method" value="X-ray"/>
    <property type="resolution" value="1.74 A"/>
    <property type="chains" value="A=1-363"/>
</dbReference>
<dbReference type="PDB" id="7CPY">
    <property type="method" value="EM"/>
    <property type="resolution" value="3.60 A"/>
    <property type="chains" value="C/D=1-363"/>
</dbReference>
<dbReference type="PDBsum" id="3B6Z"/>
<dbReference type="PDBsum" id="3B70"/>
<dbReference type="PDBsum" id="3GQV"/>
<dbReference type="PDBsum" id="7CPY"/>
<dbReference type="EMDB" id="EMD-30435"/>
<dbReference type="SMR" id="Q9Y7D0"/>
<dbReference type="DIP" id="DIP-60050N"/>
<dbReference type="IntAct" id="Q9Y7D0">
    <property type="interactions" value="1"/>
</dbReference>
<dbReference type="KEGG" id="ag:AAD34554"/>
<dbReference type="VEuPathDB" id="FungiDB:ATEG_09963"/>
<dbReference type="BioCyc" id="MetaCyc:MONOMER-18781"/>
<dbReference type="UniPathway" id="UPA00875"/>
<dbReference type="EvolutionaryTrace" id="Q9Y7D0"/>
<dbReference type="GO" id="GO:0004318">
    <property type="term" value="F:enoyl-[acyl-carrier-protein] reductase (NADH) activity"/>
    <property type="evidence" value="ECO:0000314"/>
    <property type="project" value="UniProt"/>
</dbReference>
<dbReference type="GO" id="GO:0050637">
    <property type="term" value="F:lovastatin nonaketide synthase activity"/>
    <property type="evidence" value="ECO:0007669"/>
    <property type="project" value="UniProtKB-EC"/>
</dbReference>
<dbReference type="GO" id="GO:0070402">
    <property type="term" value="F:NADPH binding"/>
    <property type="evidence" value="ECO:0000314"/>
    <property type="project" value="UniProtKB"/>
</dbReference>
<dbReference type="GO" id="GO:0016491">
    <property type="term" value="F:oxidoreductase activity"/>
    <property type="evidence" value="ECO:0000314"/>
    <property type="project" value="UniProtKB"/>
</dbReference>
<dbReference type="GO" id="GO:0016651">
    <property type="term" value="F:oxidoreductase activity, acting on NAD(P)H"/>
    <property type="evidence" value="ECO:0007669"/>
    <property type="project" value="InterPro"/>
</dbReference>
<dbReference type="GO" id="GO:0016218">
    <property type="term" value="F:polyketide synthase activity"/>
    <property type="evidence" value="ECO:0000314"/>
    <property type="project" value="UniProt"/>
</dbReference>
<dbReference type="GO" id="GO:0140735">
    <property type="term" value="P:lovastatin biosynthetic process"/>
    <property type="evidence" value="ECO:0000314"/>
    <property type="project" value="GO_Central"/>
</dbReference>
<dbReference type="GO" id="GO:0030639">
    <property type="term" value="P:polyketide biosynthetic process"/>
    <property type="evidence" value="ECO:0000314"/>
    <property type="project" value="UniProtKB"/>
</dbReference>
<dbReference type="CDD" id="cd08249">
    <property type="entry name" value="enoyl_reductase_like"/>
    <property type="match status" value="1"/>
</dbReference>
<dbReference type="Gene3D" id="3.90.180.10">
    <property type="entry name" value="Medium-chain alcohol dehydrogenases, catalytic domain"/>
    <property type="match status" value="1"/>
</dbReference>
<dbReference type="Gene3D" id="3.40.50.720">
    <property type="entry name" value="NAD(P)-binding Rossmann-like Domain"/>
    <property type="match status" value="1"/>
</dbReference>
<dbReference type="InterPro" id="IPR013154">
    <property type="entry name" value="ADH-like_N"/>
</dbReference>
<dbReference type="InterPro" id="IPR011032">
    <property type="entry name" value="GroES-like_sf"/>
</dbReference>
<dbReference type="InterPro" id="IPR036291">
    <property type="entry name" value="NAD(P)-bd_dom_sf"/>
</dbReference>
<dbReference type="InterPro" id="IPR020843">
    <property type="entry name" value="PKS_ER"/>
</dbReference>
<dbReference type="InterPro" id="IPR047122">
    <property type="entry name" value="Trans-enoyl_RdTase-like"/>
</dbReference>
<dbReference type="PANTHER" id="PTHR45348">
    <property type="entry name" value="HYPOTHETICAL OXIDOREDUCTASE (EUROFUNG)"/>
    <property type="match status" value="1"/>
</dbReference>
<dbReference type="PANTHER" id="PTHR45348:SF2">
    <property type="entry name" value="ZINC-TYPE ALCOHOL DEHYDROGENASE-LIKE PROTEIN C2E1P3.01"/>
    <property type="match status" value="1"/>
</dbReference>
<dbReference type="Pfam" id="PF08240">
    <property type="entry name" value="ADH_N"/>
    <property type="match status" value="1"/>
</dbReference>
<dbReference type="SMART" id="SM00829">
    <property type="entry name" value="PKS_ER"/>
    <property type="match status" value="1"/>
</dbReference>
<dbReference type="SUPFAM" id="SSF50129">
    <property type="entry name" value="GroES-like"/>
    <property type="match status" value="1"/>
</dbReference>
<dbReference type="SUPFAM" id="SSF51735">
    <property type="entry name" value="NAD(P)-binding Rossmann-fold domains"/>
    <property type="match status" value="1"/>
</dbReference>
<reference key="1">
    <citation type="journal article" date="1999" name="Science">
        <title>Modulation of polyketide synthase activity by accessory proteins during lovastatin biosynthesis.</title>
        <authorList>
            <person name="Kennedy J."/>
            <person name="Auclair K."/>
            <person name="Kendrew S.G."/>
            <person name="Park C."/>
            <person name="Vederas J.C."/>
            <person name="Hutchinson C.R."/>
        </authorList>
    </citation>
    <scope>NUCLEOTIDE SEQUENCE [GENOMIC DNA]</scope>
    <scope>PATHWAY</scope>
    <scope>DISRUPTION PHENOTYPE</scope>
    <scope>FUNCTION</scope>
    <scope>CATALYTIC ACTIVITY</scope>
    <source>
        <strain>ATCC 20542 / MF4845</strain>
    </source>
</reference>
<reference key="2">
    <citation type="journal article" date="1980" name="Proc. Natl. Acad. Sci. U.S.A.">
        <title>Mevinolin: a highly potent competitive inhibitor of hydroxymethylglutaryl-coenzyme A reductase and a cholesterol-lowering agent.</title>
        <authorList>
            <person name="Alberts A.W."/>
            <person name="Chen J."/>
            <person name="Kuron G."/>
            <person name="Hunt V."/>
            <person name="Huff J."/>
            <person name="Hoffman C."/>
            <person name="Rothrock J."/>
            <person name="Lopez M."/>
            <person name="Joshua H."/>
            <person name="Harris E."/>
            <person name="Patchett A."/>
            <person name="Monaghan R."/>
            <person name="Currie S."/>
            <person name="Stapley E."/>
            <person name="Albers-Schonberg G."/>
            <person name="Hensens O."/>
            <person name="Hirshfield J."/>
            <person name="Hoogsteen K."/>
            <person name="Liesch J."/>
            <person name="Springer J."/>
        </authorList>
    </citation>
    <scope>BIOTECHNOLOGY</scope>
</reference>
<reference key="3">
    <citation type="journal article" date="1999" name="Chem. Biol.">
        <title>Lovastatin biosynthesis in Aspergillus terreus: characterization of blocked mutants, enzyme activities and a multifunctional polyketide synthase gene.</title>
        <authorList>
            <person name="Hendrickson L."/>
            <person name="Davis C.R."/>
            <person name="Roach C."/>
            <person name="Nguyen D.K."/>
            <person name="Aldrich T."/>
            <person name="McAda P.C."/>
            <person name="Reeves C.D."/>
        </authorList>
    </citation>
    <scope>FUNCTION</scope>
</reference>
<reference key="4">
    <citation type="journal article" date="2003" name="Org. Biomol. Chem.">
        <title>Transformations of cyclic nonaketides by Aspergillus terreus mutants blocked for lovastatin biosynthesis at the lovA and lovC genes.</title>
        <authorList>
            <person name="Sorensen J.L."/>
            <person name="Auclair K."/>
            <person name="Kennedy J."/>
            <person name="Hutchinson C.R."/>
            <person name="Vederas J.C."/>
        </authorList>
    </citation>
    <scope>FUNCTION</scope>
</reference>
<reference key="5">
    <citation type="journal article" date="2006" name="Chem. Biol.">
        <title>Biosynthesis of lovastatin analogs with a broadly specific acyltransferase.</title>
        <authorList>
            <person name="Xie X."/>
            <person name="Watanabe K."/>
            <person name="Wojcicki W.A."/>
            <person name="Wang C.C."/>
            <person name="Tang Y."/>
        </authorList>
    </citation>
    <scope>FUNCTION</scope>
</reference>
<reference key="6">
    <citation type="journal article" date="2009" name="Biotechnol. Bioeng.">
        <title>Rational improvement of simvastatin synthase solubility in Escherichia coli leads to higher whole-cell biocatalytic activity.</title>
        <authorList>
            <person name="Xie X."/>
            <person name="Pashkov I."/>
            <person name="Gao X."/>
            <person name="Guerrero J.L."/>
            <person name="Yeates T.O."/>
            <person name="Tang Y."/>
        </authorList>
    </citation>
    <scope>FUNCTION</scope>
</reference>
<reference key="7">
    <citation type="journal article" date="2009" name="Chem. Biol.">
        <title>Directed evolution and structural characterization of a simvastatin synthase.</title>
        <authorList>
            <person name="Gao X."/>
            <person name="Xie X."/>
            <person name="Pashkov I."/>
            <person name="Sawaya M.R."/>
            <person name="Laidman J."/>
            <person name="Zhang W."/>
            <person name="Cacho R."/>
            <person name="Yeates T.O."/>
            <person name="Tang Y."/>
        </authorList>
    </citation>
    <scope>FUNCTION</scope>
</reference>
<reference key="8">
    <citation type="journal article" date="2009" name="J. Am. Chem. Soc.">
        <title>Acyltransferase mediated polyketide release from a fungal megasynthase.</title>
        <authorList>
            <person name="Xie X."/>
            <person name="Meehan M.J."/>
            <person name="Xu W."/>
            <person name="Dorrestein P.C."/>
            <person name="Tang Y."/>
        </authorList>
    </citation>
    <scope>FUNCTION</scope>
</reference>
<reference key="9">
    <citation type="journal article" date="2009" name="Science">
        <title>Complete reconstitution of a highly reducing iterative polyketide synthase.</title>
        <authorList>
            <person name="Ma S.M."/>
            <person name="Li J.W."/>
            <person name="Choi J.W."/>
            <person name="Zhou H."/>
            <person name="Lee K.K."/>
            <person name="Moorthie V.A."/>
            <person name="Xie X."/>
            <person name="Kealey J.T."/>
            <person name="Da Silva N.A."/>
            <person name="Vederas J.C."/>
            <person name="Tang Y."/>
        </authorList>
    </citation>
    <scope>FUNCTION</scope>
    <scope>PATHWAY</scope>
</reference>
<reference key="10">
    <citation type="journal article" date="2011" name="Biochemistry">
        <title>FT-ICR-MS characterization of intermediates in the biosynthesis of the alpha-methylbutyrate side chain of lovastatin by the 277 kDa polyketide synthase LovF.</title>
        <authorList>
            <person name="Meehan M.J."/>
            <person name="Xie X."/>
            <person name="Zhao X."/>
            <person name="Xu W."/>
            <person name="Tang Y."/>
            <person name="Dorrestein P.C."/>
        </authorList>
    </citation>
    <scope>FUNCTION</scope>
</reference>
<reference key="11">
    <citation type="journal article" date="2011" name="J. Am. Chem. Soc.">
        <title>Double oxidation of the cyclic nonaketide dihydromonacolin L to monacolin J by a single cytochrome P450 monooxygenase, LovA.</title>
        <authorList>
            <person name="Barriuso J."/>
            <person name="Nguyen D.T."/>
            <person name="Li J.W."/>
            <person name="Roberts J.N."/>
            <person name="MacNevin G."/>
            <person name="Chaytor J.L."/>
            <person name="Marcus S.L."/>
            <person name="Vederas J.C."/>
            <person name="Ro D.K."/>
        </authorList>
    </citation>
    <scope>FUNCTION</scope>
    <scope>CATALYTIC ACTIVITY</scope>
    <scope>SUBCELLULAR LOCATION</scope>
    <scope>BIOPHYSICOCHEMICAL PROPERTIES</scope>
</reference>
<reference key="12">
    <citation type="journal article" date="2013" name="Angew. Chem. Int. Ed. Engl.">
        <title>LovG: the thioesterase required for dihydromonacolin L release and lovastatin nonaketide synthase turnover in lovastatin biosynthesis.</title>
        <authorList>
            <person name="Xu W."/>
            <person name="Chooi Y.H."/>
            <person name="Choi J.W."/>
            <person name="Li S."/>
            <person name="Vederas J.C."/>
            <person name="Da Silva N.A."/>
            <person name="Tang Y."/>
        </authorList>
    </citation>
    <scope>FUNCTION</scope>
</reference>
<reference key="13">
    <citation type="journal article" date="2014" name="Nat. Chem. Biol.">
        <title>The role of distant mutations and allosteric regulation on LovD active site dynamics.</title>
        <authorList>
            <person name="Jimenez-Oses G."/>
            <person name="Osuna S."/>
            <person name="Gao X."/>
            <person name="Sawaya M.R."/>
            <person name="Gilson L."/>
            <person name="Collier S.J."/>
            <person name="Huisman G.W."/>
            <person name="Yeates T.O."/>
            <person name="Tang Y."/>
            <person name="Houk K.N."/>
        </authorList>
    </citation>
    <scope>FUNCTION</scope>
    <source>
        <strain>ATCC 20542 / MF4845</strain>
    </source>
</reference>
<reference key="14">
    <citation type="journal article" date="2017" name="Int. J. Mol. Sci.">
        <title>Simvastatin inhibits cell proliferation and migration in human anaplastic thyroid cancer.</title>
        <authorList>
            <person name="Chen M.C."/>
            <person name="Tsai Y.C."/>
            <person name="Tseng J.H."/>
            <person name="Liou J.J."/>
            <person name="Horng S."/>
            <person name="Wen H.C."/>
            <person name="Fan Y.C."/>
            <person name="Zhong W.B."/>
            <person name="Hsu S.P."/>
        </authorList>
    </citation>
    <scope>BIOTECHNOLOGY</scope>
</reference>
<reference key="15">
    <citation type="journal article" date="2018" name="Int. J. Mol. Sci.">
        <title>A synergistic anti-cancer effect of troglitazone and lovastatin in a human anaplastic thyroid cancer cell line and in a mouse xenograft model.</title>
        <authorList>
            <person name="Zhong W.B."/>
            <person name="Tsai Y.C."/>
            <person name="Chin L.H."/>
            <person name="Tseng J.H."/>
            <person name="Tang L.W."/>
            <person name="Horng S."/>
            <person name="Fan Y.C."/>
            <person name="Hsu S.P."/>
        </authorList>
    </citation>
    <scope>BIOTECHNOLOGY</scope>
</reference>
<reference key="16">
    <citation type="journal article" date="2025" name="Microbiol. Res.">
        <title>Development of a landing pad system for Aspergillus niger and its application in the overproduction of monacolin J.</title>
        <authorList>
            <person name="Yao L."/>
            <person name="Zheng J."/>
            <person name="Wang B."/>
            <person name="Pan L."/>
        </authorList>
    </citation>
    <scope>FUNCTION</scope>
    <scope>PATHWAY</scope>
</reference>
<reference key="17">
    <citation type="journal article" date="2012" name="Proc. Natl. Acad. Sci. U.S.A.">
        <title>Crystal structure and biochemical studies of the trans-acting polyketide enoyl reductase LovC from lovastatin biosynthesis.</title>
        <authorList>
            <person name="Ames B.D."/>
            <person name="Nguyen C."/>
            <person name="Bruegger J."/>
            <person name="Smith P."/>
            <person name="Xu W."/>
            <person name="Ma S."/>
            <person name="Wong E."/>
            <person name="Wong S."/>
            <person name="Xie X."/>
            <person name="Li J.W."/>
            <person name="Vederas J.C."/>
            <person name="Tang Y."/>
            <person name="Tsai S.C."/>
        </authorList>
    </citation>
    <scope>X-RAY CRYSTALLOGRAPHY (1.74 ANGSTROMS) IN COMPLEX WITH NADP</scope>
    <scope>FUNCTION</scope>
    <scope>INTERACTION WITH LOVB</scope>
    <scope>SUBUNIT</scope>
    <scope>MUTAGENESIS OF LYS-54; SER-138; THR-139 AND ASN-263</scope>
</reference>
<reference key="18">
    <citation type="journal article" date="2021" name="Nat. Commun.">
        <title>Structural basis for the biosynthesis of lovastatin.</title>
        <authorList>
            <person name="Wang J."/>
            <person name="Liang J."/>
            <person name="Chen L."/>
            <person name="Zhang W."/>
            <person name="Kong L."/>
            <person name="Peng C."/>
            <person name="Su C."/>
            <person name="Tang Y."/>
            <person name="Deng Z."/>
            <person name="Wang Z."/>
        </authorList>
    </citation>
    <scope>STRUCTURE BY ELECTRON MICROSCOPY (3.60 ANGSTROMS) IN COMPLEX WITH LOVB</scope>
    <scope>SUBUNIT</scope>
    <scope>FUNCTION</scope>
    <scope>CATALYTIC ACTIVITY</scope>
    <scope>DOMAIN</scope>
    <scope>MUTAGENESIS OF THR-271; ARG-272; LYS-273 AND MET-274</scope>
</reference>
<comment type="function">
    <text evidence="1 2 3 4 5 6 7 8 9 10 11 12 13 16 17">Trans-enoyl reductase; part of the gene cluster that mediates the biosynthesis of lovastatin (also known as mevinolin, mevacor or monacolin K), a hypolipidemic inhibitor of (3S)-hydroxymethylglutaryl-coenzyme A (HMG-CoA) reductase (HMGR) (PubMed:10334994, PubMed:12929390, PubMed:21495633, PubMed:39515266, PubMed:33558520). The first step in the biosynthesis of lovastatin is the production of dihydromonacolin L acid (DML) by the lovastatin nonaketide synthase lovB and the trans-acting enoyl reductase lovC (called the lovB-lovC megasynthase complex) via condensation of one acetyl-CoA unit and 8 malonyl-CoA units. The formation of the LovB/C complex is essential for the integrity of the catalytic chamber to the complete total synthesis of DML acid (PubMed:10334994, PubMed:10381407, PubMed:19900898, PubMed:22733743, PubMed:33558520). Dihydromonacolin L acid is released from lovB by the thioesterase lovG (PubMed:23653178, PubMed:33558520). Next, dihydromonacolin L acid is oxidized by the dihydromonacolin L monooxygenase lovA twice to form monacolin J acid (PubMed:12929390, PubMed:21495633). The 2-methylbutyrate moiety of lovastatin is synthesized by the lovastatin diketide synthase lovF via condensation of one acetyl-CoA unit and one malonyl-CoA unit (PubMed:19530726, PubMed:21069965). Finally, the covalent attachment of this moiety to monacolin J acid is catalyzed by the transesterase lovD to yield lovastatin (PubMed:10334994, PubMed:17113998, PubMed:18988191, PubMed:19875080, PubMed:24727900). LovD has broad substrate specificity and can also convert monacolin J to simvastatin using alpha-dimethylbutanoyl-S-methyl-3-mercaptopropionate (DMB-S-MMP) as the thioester acyl donor, and can also catalyze the reverse reaction and function as hydrolase in vitro (PubMed:19875080). LovD has much higher activity with LovF-bound 2-methylbutanoate than with free diketide substrates (PubMed:21069965).</text>
</comment>
<comment type="catalytic activity">
    <reaction evidence="1 16">
        <text>holo-[lovastatin nonaketide synthase] + 9 malonyl-CoA + S-adenosyl-L-methionine + 11 NADPH + 19 H(+) = dihydromonacolin L-[lovastatin nonaketide synthase] + S-adenosyl-L-homocysteine + 9 CO2 + 11 NADP(+) + 9 CoA + 6 H2O</text>
        <dbReference type="Rhea" id="RHEA:18565"/>
        <dbReference type="Rhea" id="RHEA-COMP:10042"/>
        <dbReference type="Rhea" id="RHEA-COMP:10043"/>
        <dbReference type="ChEBI" id="CHEBI:15377"/>
        <dbReference type="ChEBI" id="CHEBI:15378"/>
        <dbReference type="ChEBI" id="CHEBI:16526"/>
        <dbReference type="ChEBI" id="CHEBI:57287"/>
        <dbReference type="ChEBI" id="CHEBI:57384"/>
        <dbReference type="ChEBI" id="CHEBI:57783"/>
        <dbReference type="ChEBI" id="CHEBI:57856"/>
        <dbReference type="ChEBI" id="CHEBI:58349"/>
        <dbReference type="ChEBI" id="CHEBI:59789"/>
        <dbReference type="ChEBI" id="CHEBI:64479"/>
        <dbReference type="ChEBI" id="CHEBI:79032"/>
        <dbReference type="EC" id="2.3.1.161"/>
    </reaction>
    <physiologicalReaction direction="left-to-right" evidence="1 16">
        <dbReference type="Rhea" id="RHEA:18566"/>
    </physiologicalReaction>
</comment>
<comment type="pathway">
    <text evidence="1 8 17">Polyketide biosynthesis; lovastatin biosynthesis.</text>
</comment>
<comment type="subunit">
    <text evidence="11 16">Each MAT domain from the lovB homodimer binds one lovC molecule to form the final active lovB-lovC megasynthase complex.</text>
</comment>
<comment type="disruption phenotype">
    <text evidence="1">Loss of lovastatin biosynthesis.</text>
</comment>
<comment type="biotechnology">
    <text evidence="14 15 18">Lovastatin acts as a hypolipidemic agent that works as inhibitor of (3S)-hydroxymethylglutaryl-coenzyme A (HMG-CoA) reductase (HMGR) which reduces HMG-CoA to mevalonate and is the key step in cholesterol biosynthesis (PubMed:6933445). Lovastatin, simvastatin and related compounds are widely used to treat hypercholesteremia and reduce the risk of cardiovascular disease (PubMed:6933445). Furthermore, statins such as lovastatin were found to be anticancer agents (PubMed:29236027, PubMed:29932104).</text>
</comment>
<comment type="similarity">
    <text evidence="20">Belongs to the zinc-containing alcohol dehydrogenase family.</text>
</comment>
<name>LOVC_ASPTE</name>
<sequence length="363" mass="39511">MGDQPFIPPPQQTALTVNDHDEVTVWNAAPCPMLPRDQVYVRVEAVAINPSDTKMRGQFATPWAFLGTDYAGTVVAVGSDVTHIQVGDRVYGAQNEMCPRTPDQGAFSQYTVTRGRVWAKIPKGLSFEQAAALPAGISTAGLAMKLLGLPLPSPSADQPPTHSKPVYVLVYGGSTATATVTMQMLRLSGYIPIATCSPHNFDLAKSRGAEEVFDYRAPNLAQTIRTYTKNNLRYALDCITNVESTTFCFAAIGRAGGHYVSLNPFPEHAATRKMVTTDWTLGPTIFGEGSTWPAPYGRPGSEEERQFGEDLWRIAGQLVEDGRLVHHPLRVVQGGFDHIKQGMELVRKGELSGEKLVVRLEGP</sequence>
<feature type="chain" id="PRO_0000430267" description="Lovastatin nonaketide synthase, enoyl reductase component lovC">
    <location>
        <begin position="1"/>
        <end position="363"/>
    </location>
</feature>
<feature type="region of interest" description="LovB-binding" evidence="16">
    <location>
        <begin position="226"/>
        <end position="272"/>
    </location>
</feature>
<feature type="binding site" evidence="11">
    <location>
        <begin position="51"/>
        <end position="54"/>
    </location>
    <ligand>
        <name>NADP(+)</name>
        <dbReference type="ChEBI" id="CHEBI:58349"/>
    </ligand>
</feature>
<feature type="binding site" evidence="11">
    <location>
        <begin position="174"/>
        <end position="177"/>
    </location>
    <ligand>
        <name>NADP(+)</name>
        <dbReference type="ChEBI" id="CHEBI:58349"/>
    </ligand>
</feature>
<feature type="binding site" evidence="11">
    <location>
        <begin position="197"/>
        <end position="200"/>
    </location>
    <ligand>
        <name>NADP(+)</name>
        <dbReference type="ChEBI" id="CHEBI:58349"/>
    </ligand>
</feature>
<feature type="binding site" evidence="11">
    <location>
        <position position="215"/>
    </location>
    <ligand>
        <name>NADP(+)</name>
        <dbReference type="ChEBI" id="CHEBI:58349"/>
    </ligand>
</feature>
<feature type="binding site" evidence="11">
    <location>
        <begin position="262"/>
        <end position="263"/>
    </location>
    <ligand>
        <name>NADP(+)</name>
        <dbReference type="ChEBI" id="CHEBI:58349"/>
    </ligand>
</feature>
<feature type="binding site" evidence="11">
    <location>
        <position position="280"/>
    </location>
    <ligand>
        <name>NADP(+)</name>
        <dbReference type="ChEBI" id="CHEBI:58349"/>
    </ligand>
</feature>
<feature type="binding site" evidence="11">
    <location>
        <begin position="351"/>
        <end position="352"/>
    </location>
    <ligand>
        <name>NADP(+)</name>
        <dbReference type="ChEBI" id="CHEBI:58349"/>
    </ligand>
</feature>
<feature type="mutagenesis site" description="Reduces catalytic efficiency." evidence="11">
    <original>K</original>
    <variation>S</variation>
    <location>
        <position position="54"/>
    </location>
</feature>
<feature type="mutagenesis site" description="Reduces catalytic efficiency." evidence="11">
    <original>S</original>
    <variation>M</variation>
    <location>
        <position position="138"/>
    </location>
</feature>
<feature type="mutagenesis site" description="Reduces catalytic efficiency." evidence="11">
    <original>T</original>
    <variation>V</variation>
    <location>
        <position position="139"/>
    </location>
</feature>
<feature type="mutagenesis site" description="Reduces catalytic efficiency." evidence="11">
    <original>N</original>
    <variation>S</variation>
    <location>
        <position position="263"/>
    </location>
</feature>
<feature type="mutagenesis site" description="Impairs the binding to lovB; when associated with I-272, G-273 and A-274." evidence="16">
    <original>T</original>
    <variation>L</variation>
    <location>
        <position position="271"/>
    </location>
</feature>
<feature type="mutagenesis site" description="Impairs the binding to lovB; when associated with L-271, G-273 and A-274." evidence="16">
    <original>R</original>
    <variation>I</variation>
    <location>
        <position position="272"/>
    </location>
</feature>
<feature type="mutagenesis site" description="Impairs the binding to lovB; when associated with L-271, I-272 and A-274." evidence="16">
    <original>K</original>
    <variation>G</variation>
    <location>
        <position position="273"/>
    </location>
</feature>
<feature type="mutagenesis site" description="Impairs the binding to lovB; when associated with L-271, I-272 and G-273." evidence="16">
    <original>M</original>
    <variation>A</variation>
    <location>
        <position position="274"/>
    </location>
</feature>
<feature type="strand" evidence="23">
    <location>
        <begin position="12"/>
        <end position="17"/>
    </location>
</feature>
<feature type="strand" evidence="23">
    <location>
        <begin position="23"/>
        <end position="29"/>
    </location>
</feature>
<feature type="strand" evidence="23">
    <location>
        <begin position="38"/>
        <end position="47"/>
    </location>
</feature>
<feature type="helix" evidence="23">
    <location>
        <begin position="50"/>
        <end position="53"/>
    </location>
</feature>
<feature type="helix" evidence="21">
    <location>
        <begin position="57"/>
        <end position="59"/>
    </location>
</feature>
<feature type="strand" evidence="23">
    <location>
        <begin position="68"/>
        <end position="77"/>
    </location>
</feature>
<feature type="strand" evidence="23">
    <location>
        <begin position="89"/>
        <end position="93"/>
    </location>
</feature>
<feature type="strand" evidence="23">
    <location>
        <begin position="106"/>
        <end position="112"/>
    </location>
</feature>
<feature type="strand" evidence="23">
    <location>
        <begin position="118"/>
        <end position="120"/>
    </location>
</feature>
<feature type="helix" evidence="23">
    <location>
        <begin position="127"/>
        <end position="131"/>
    </location>
</feature>
<feature type="helix" evidence="23">
    <location>
        <begin position="134"/>
        <end position="147"/>
    </location>
</feature>
<feature type="strand" evidence="23">
    <location>
        <begin position="167"/>
        <end position="172"/>
    </location>
</feature>
<feature type="helix" evidence="23">
    <location>
        <begin position="176"/>
        <end position="187"/>
    </location>
</feature>
<feature type="strand" evidence="23">
    <location>
        <begin position="191"/>
        <end position="196"/>
    </location>
</feature>
<feature type="helix" evidence="23">
    <location>
        <begin position="198"/>
        <end position="200"/>
    </location>
</feature>
<feature type="helix" evidence="23">
    <location>
        <begin position="201"/>
        <end position="206"/>
    </location>
</feature>
<feature type="strand" evidence="23">
    <location>
        <begin position="210"/>
        <end position="214"/>
    </location>
</feature>
<feature type="helix" evidence="23">
    <location>
        <begin position="220"/>
        <end position="227"/>
    </location>
</feature>
<feature type="turn" evidence="23">
    <location>
        <begin position="228"/>
        <end position="230"/>
    </location>
</feature>
<feature type="strand" evidence="23">
    <location>
        <begin position="234"/>
        <end position="239"/>
    </location>
</feature>
<feature type="helix" evidence="23">
    <location>
        <begin position="242"/>
        <end position="251"/>
    </location>
</feature>
<feature type="strand" evidence="23">
    <location>
        <begin position="257"/>
        <end position="263"/>
    </location>
</feature>
<feature type="strand" evidence="23">
    <location>
        <begin position="275"/>
        <end position="279"/>
    </location>
</feature>
<feature type="helix" evidence="23">
    <location>
        <begin position="282"/>
        <end position="286"/>
    </location>
</feature>
<feature type="strand" evidence="22">
    <location>
        <begin position="289"/>
        <end position="291"/>
    </location>
</feature>
<feature type="turn" evidence="23">
    <location>
        <begin position="294"/>
        <end position="296"/>
    </location>
</feature>
<feature type="helix" evidence="23">
    <location>
        <begin position="302"/>
        <end position="320"/>
    </location>
</feature>
<feature type="strand" evidence="23">
    <location>
        <begin position="329"/>
        <end position="334"/>
    </location>
</feature>
<feature type="helix" evidence="23">
    <location>
        <begin position="336"/>
        <end position="347"/>
    </location>
</feature>
<feature type="strand" evidence="23">
    <location>
        <begin position="355"/>
        <end position="360"/>
    </location>
</feature>
<keyword id="KW-0002">3D-structure</keyword>
<keyword id="KW-0521">NADP</keyword>
<keyword id="KW-0547">Nucleotide-binding</keyword>
<keyword id="KW-0560">Oxidoreductase</keyword>
<keyword id="KW-0808">Transferase</keyword>
<proteinExistence type="evidence at protein level"/>
<organism>
    <name type="scientific">Aspergillus terreus</name>
    <dbReference type="NCBI Taxonomy" id="33178"/>
    <lineage>
        <taxon>Eukaryota</taxon>
        <taxon>Fungi</taxon>
        <taxon>Dikarya</taxon>
        <taxon>Ascomycota</taxon>
        <taxon>Pezizomycotina</taxon>
        <taxon>Eurotiomycetes</taxon>
        <taxon>Eurotiomycetidae</taxon>
        <taxon>Eurotiales</taxon>
        <taxon>Aspergillaceae</taxon>
        <taxon>Aspergillus</taxon>
        <taxon>Aspergillus subgen. Circumdati</taxon>
    </lineage>
</organism>
<protein>
    <recommendedName>
        <fullName evidence="19">Lovastatin nonaketide synthase, enoyl reductase component lovC</fullName>
        <ecNumber evidence="1 16">2.3.1.161</ecNumber>
    </recommendedName>
    <alternativeName>
        <fullName evidence="19">Lovastatin biosynthesis cluster protein C</fullName>
    </alternativeName>
    <alternativeName>
        <fullName evidence="19">Trans-enoyl reductase lovC</fullName>
    </alternativeName>
</protein>
<evidence type="ECO:0000269" key="1">
    <source>
    </source>
</evidence>
<evidence type="ECO:0000269" key="2">
    <source>
    </source>
</evidence>
<evidence type="ECO:0000269" key="3">
    <source>
    </source>
</evidence>
<evidence type="ECO:0000269" key="4">
    <source>
    </source>
</evidence>
<evidence type="ECO:0000269" key="5">
    <source>
    </source>
</evidence>
<evidence type="ECO:0000269" key="6">
    <source>
    </source>
</evidence>
<evidence type="ECO:0000269" key="7">
    <source>
    </source>
</evidence>
<evidence type="ECO:0000269" key="8">
    <source>
    </source>
</evidence>
<evidence type="ECO:0000269" key="9">
    <source>
    </source>
</evidence>
<evidence type="ECO:0000269" key="10">
    <source>
    </source>
</evidence>
<evidence type="ECO:0000269" key="11">
    <source>
    </source>
</evidence>
<evidence type="ECO:0000269" key="12">
    <source>
    </source>
</evidence>
<evidence type="ECO:0000269" key="13">
    <source>
    </source>
</evidence>
<evidence type="ECO:0000269" key="14">
    <source>
    </source>
</evidence>
<evidence type="ECO:0000269" key="15">
    <source>
    </source>
</evidence>
<evidence type="ECO:0000269" key="16">
    <source>
    </source>
</evidence>
<evidence type="ECO:0000269" key="17">
    <source>
    </source>
</evidence>
<evidence type="ECO:0000269" key="18">
    <source>
    </source>
</evidence>
<evidence type="ECO:0000303" key="19">
    <source>
    </source>
</evidence>
<evidence type="ECO:0000305" key="20"/>
<evidence type="ECO:0007829" key="21">
    <source>
        <dbReference type="PDB" id="3B6Z"/>
    </source>
</evidence>
<evidence type="ECO:0007829" key="22">
    <source>
        <dbReference type="PDB" id="3B70"/>
    </source>
</evidence>
<evidence type="ECO:0007829" key="23">
    <source>
        <dbReference type="PDB" id="3GQV"/>
    </source>
</evidence>
<accession>Q9Y7D0</accession>
<gene>
    <name evidence="19" type="primary">lovC</name>
</gene>